<accession>Q11HU2</accession>
<sequence>MADLKAHIAKVASGAALSFAEAREAFGIIMSGEATPSQIGGFLMALRVRGETVDEISGAVDTMRSKMLPVTAPAEAVDIVGTGGDASGTYNVSTCAAFIVAGCGVPVAKHGNRALSSKSGAADSLVALGVNIELGPDQIAACIAEAGVGFMFAPSHHAAMRHVGPTRVELGTRTIFNLLGPLSNPAGVKRQLVGVFSAQWVEPLAHVLRQLGTEKAWVVHGDGLDEMTTAGVTRVASLEYGEVRTFEITPEEVGLQRSAAAALKGGDGEYNGKALRRVLEGERNAYRDIAVLNAGGALIVAGKAETLKDAVALASESIESGRALAALEKLVEVSNRKP</sequence>
<reference key="1">
    <citation type="submission" date="2006-06" db="EMBL/GenBank/DDBJ databases">
        <title>Complete sequence of chromosome of Mesorhizobium sp. BNC1.</title>
        <authorList>
            <consortium name="US DOE Joint Genome Institute"/>
            <person name="Copeland A."/>
            <person name="Lucas S."/>
            <person name="Lapidus A."/>
            <person name="Barry K."/>
            <person name="Detter J.C."/>
            <person name="Glavina del Rio T."/>
            <person name="Hammon N."/>
            <person name="Israni S."/>
            <person name="Dalin E."/>
            <person name="Tice H."/>
            <person name="Pitluck S."/>
            <person name="Chertkov O."/>
            <person name="Brettin T."/>
            <person name="Bruce D."/>
            <person name="Han C."/>
            <person name="Tapia R."/>
            <person name="Gilna P."/>
            <person name="Schmutz J."/>
            <person name="Larimer F."/>
            <person name="Land M."/>
            <person name="Hauser L."/>
            <person name="Kyrpides N."/>
            <person name="Mikhailova N."/>
            <person name="Richardson P."/>
        </authorList>
    </citation>
    <scope>NUCLEOTIDE SEQUENCE [LARGE SCALE GENOMIC DNA]</scope>
    <source>
        <strain>BNC1</strain>
    </source>
</reference>
<feature type="chain" id="PRO_1000043028" description="Anthranilate phosphoribosyltransferase">
    <location>
        <begin position="1"/>
        <end position="338"/>
    </location>
</feature>
<feature type="binding site" evidence="1">
    <location>
        <position position="81"/>
    </location>
    <ligand>
        <name>5-phospho-alpha-D-ribose 1-diphosphate</name>
        <dbReference type="ChEBI" id="CHEBI:58017"/>
    </ligand>
</feature>
<feature type="binding site" evidence="1">
    <location>
        <position position="81"/>
    </location>
    <ligand>
        <name>anthranilate</name>
        <dbReference type="ChEBI" id="CHEBI:16567"/>
        <label>1</label>
    </ligand>
</feature>
<feature type="binding site" evidence="1">
    <location>
        <begin position="84"/>
        <end position="85"/>
    </location>
    <ligand>
        <name>5-phospho-alpha-D-ribose 1-diphosphate</name>
        <dbReference type="ChEBI" id="CHEBI:58017"/>
    </ligand>
</feature>
<feature type="binding site" evidence="1">
    <location>
        <position position="89"/>
    </location>
    <ligand>
        <name>5-phospho-alpha-D-ribose 1-diphosphate</name>
        <dbReference type="ChEBI" id="CHEBI:58017"/>
    </ligand>
</feature>
<feature type="binding site" evidence="1">
    <location>
        <begin position="91"/>
        <end position="94"/>
    </location>
    <ligand>
        <name>5-phospho-alpha-D-ribose 1-diphosphate</name>
        <dbReference type="ChEBI" id="CHEBI:58017"/>
    </ligand>
</feature>
<feature type="binding site" evidence="1">
    <location>
        <position position="93"/>
    </location>
    <ligand>
        <name>Mg(2+)</name>
        <dbReference type="ChEBI" id="CHEBI:18420"/>
        <label>1</label>
    </ligand>
</feature>
<feature type="binding site" evidence="1">
    <location>
        <begin position="109"/>
        <end position="117"/>
    </location>
    <ligand>
        <name>5-phospho-alpha-D-ribose 1-diphosphate</name>
        <dbReference type="ChEBI" id="CHEBI:58017"/>
    </ligand>
</feature>
<feature type="binding site" evidence="1">
    <location>
        <position position="112"/>
    </location>
    <ligand>
        <name>anthranilate</name>
        <dbReference type="ChEBI" id="CHEBI:16567"/>
        <label>1</label>
    </ligand>
</feature>
<feature type="binding site" evidence="1">
    <location>
        <position position="121"/>
    </location>
    <ligand>
        <name>5-phospho-alpha-D-ribose 1-diphosphate</name>
        <dbReference type="ChEBI" id="CHEBI:58017"/>
    </ligand>
</feature>
<feature type="binding site" evidence="1">
    <location>
        <position position="167"/>
    </location>
    <ligand>
        <name>anthranilate</name>
        <dbReference type="ChEBI" id="CHEBI:16567"/>
        <label>2</label>
    </ligand>
</feature>
<feature type="binding site" evidence="1">
    <location>
        <position position="225"/>
    </location>
    <ligand>
        <name>Mg(2+)</name>
        <dbReference type="ChEBI" id="CHEBI:18420"/>
        <label>2</label>
    </ligand>
</feature>
<feature type="binding site" evidence="1">
    <location>
        <position position="226"/>
    </location>
    <ligand>
        <name>Mg(2+)</name>
        <dbReference type="ChEBI" id="CHEBI:18420"/>
        <label>1</label>
    </ligand>
</feature>
<feature type="binding site" evidence="1">
    <location>
        <position position="226"/>
    </location>
    <ligand>
        <name>Mg(2+)</name>
        <dbReference type="ChEBI" id="CHEBI:18420"/>
        <label>2</label>
    </ligand>
</feature>
<evidence type="ECO:0000255" key="1">
    <source>
        <dbReference type="HAMAP-Rule" id="MF_00211"/>
    </source>
</evidence>
<name>TRPD_CHESB</name>
<gene>
    <name evidence="1" type="primary">trpD</name>
    <name type="ordered locus">Meso_1638</name>
</gene>
<comment type="function">
    <text evidence="1">Catalyzes the transfer of the phosphoribosyl group of 5-phosphorylribose-1-pyrophosphate (PRPP) to anthranilate to yield N-(5'-phosphoribosyl)-anthranilate (PRA).</text>
</comment>
<comment type="catalytic activity">
    <reaction evidence="1">
        <text>N-(5-phospho-beta-D-ribosyl)anthranilate + diphosphate = 5-phospho-alpha-D-ribose 1-diphosphate + anthranilate</text>
        <dbReference type="Rhea" id="RHEA:11768"/>
        <dbReference type="ChEBI" id="CHEBI:16567"/>
        <dbReference type="ChEBI" id="CHEBI:18277"/>
        <dbReference type="ChEBI" id="CHEBI:33019"/>
        <dbReference type="ChEBI" id="CHEBI:58017"/>
        <dbReference type="EC" id="2.4.2.18"/>
    </reaction>
</comment>
<comment type="cofactor">
    <cofactor evidence="1">
        <name>Mg(2+)</name>
        <dbReference type="ChEBI" id="CHEBI:18420"/>
    </cofactor>
    <text evidence="1">Binds 2 magnesium ions per monomer.</text>
</comment>
<comment type="pathway">
    <text evidence="1">Amino-acid biosynthesis; L-tryptophan biosynthesis; L-tryptophan from chorismate: step 2/5.</text>
</comment>
<comment type="subunit">
    <text evidence="1">Homodimer.</text>
</comment>
<comment type="similarity">
    <text evidence="1">Belongs to the anthranilate phosphoribosyltransferase family.</text>
</comment>
<protein>
    <recommendedName>
        <fullName evidence="1">Anthranilate phosphoribosyltransferase</fullName>
        <ecNumber evidence="1">2.4.2.18</ecNumber>
    </recommendedName>
</protein>
<organism>
    <name type="scientific">Chelativorans sp. (strain BNC1)</name>
    <dbReference type="NCBI Taxonomy" id="266779"/>
    <lineage>
        <taxon>Bacteria</taxon>
        <taxon>Pseudomonadati</taxon>
        <taxon>Pseudomonadota</taxon>
        <taxon>Alphaproteobacteria</taxon>
        <taxon>Hyphomicrobiales</taxon>
        <taxon>Phyllobacteriaceae</taxon>
        <taxon>Chelativorans</taxon>
    </lineage>
</organism>
<proteinExistence type="inferred from homology"/>
<dbReference type="EC" id="2.4.2.18" evidence="1"/>
<dbReference type="EMBL" id="CP000390">
    <property type="protein sequence ID" value="ABG63033.1"/>
    <property type="molecule type" value="Genomic_DNA"/>
</dbReference>
<dbReference type="SMR" id="Q11HU2"/>
<dbReference type="STRING" id="266779.Meso_1638"/>
<dbReference type="KEGG" id="mes:Meso_1638"/>
<dbReference type="eggNOG" id="COG0547">
    <property type="taxonomic scope" value="Bacteria"/>
</dbReference>
<dbReference type="HOGENOM" id="CLU_034315_2_1_5"/>
<dbReference type="OrthoDB" id="9806430at2"/>
<dbReference type="UniPathway" id="UPA00035">
    <property type="reaction ID" value="UER00041"/>
</dbReference>
<dbReference type="GO" id="GO:0005829">
    <property type="term" value="C:cytosol"/>
    <property type="evidence" value="ECO:0007669"/>
    <property type="project" value="TreeGrafter"/>
</dbReference>
<dbReference type="GO" id="GO:0004048">
    <property type="term" value="F:anthranilate phosphoribosyltransferase activity"/>
    <property type="evidence" value="ECO:0007669"/>
    <property type="project" value="UniProtKB-UniRule"/>
</dbReference>
<dbReference type="GO" id="GO:0000287">
    <property type="term" value="F:magnesium ion binding"/>
    <property type="evidence" value="ECO:0007669"/>
    <property type="project" value="UniProtKB-UniRule"/>
</dbReference>
<dbReference type="GO" id="GO:0000162">
    <property type="term" value="P:L-tryptophan biosynthetic process"/>
    <property type="evidence" value="ECO:0007669"/>
    <property type="project" value="UniProtKB-UniRule"/>
</dbReference>
<dbReference type="FunFam" id="3.40.1030.10:FF:000002">
    <property type="entry name" value="Anthranilate phosphoribosyltransferase"/>
    <property type="match status" value="1"/>
</dbReference>
<dbReference type="Gene3D" id="3.40.1030.10">
    <property type="entry name" value="Nucleoside phosphorylase/phosphoribosyltransferase catalytic domain"/>
    <property type="match status" value="1"/>
</dbReference>
<dbReference type="Gene3D" id="1.20.970.10">
    <property type="entry name" value="Transferase, Pyrimidine Nucleoside Phosphorylase, Chain C"/>
    <property type="match status" value="1"/>
</dbReference>
<dbReference type="HAMAP" id="MF_00211">
    <property type="entry name" value="TrpD"/>
    <property type="match status" value="1"/>
</dbReference>
<dbReference type="InterPro" id="IPR005940">
    <property type="entry name" value="Anthranilate_Pribosyl_Tfrase"/>
</dbReference>
<dbReference type="InterPro" id="IPR000312">
    <property type="entry name" value="Glycosyl_Trfase_fam3"/>
</dbReference>
<dbReference type="InterPro" id="IPR017459">
    <property type="entry name" value="Glycosyl_Trfase_fam3_N_dom"/>
</dbReference>
<dbReference type="InterPro" id="IPR036320">
    <property type="entry name" value="Glycosyl_Trfase_fam3_N_dom_sf"/>
</dbReference>
<dbReference type="InterPro" id="IPR035902">
    <property type="entry name" value="Nuc_phospho_transferase"/>
</dbReference>
<dbReference type="NCBIfam" id="TIGR01245">
    <property type="entry name" value="trpD"/>
    <property type="match status" value="1"/>
</dbReference>
<dbReference type="PANTHER" id="PTHR43285">
    <property type="entry name" value="ANTHRANILATE PHOSPHORIBOSYLTRANSFERASE"/>
    <property type="match status" value="1"/>
</dbReference>
<dbReference type="PANTHER" id="PTHR43285:SF2">
    <property type="entry name" value="ANTHRANILATE PHOSPHORIBOSYLTRANSFERASE"/>
    <property type="match status" value="1"/>
</dbReference>
<dbReference type="Pfam" id="PF02885">
    <property type="entry name" value="Glycos_trans_3N"/>
    <property type="match status" value="1"/>
</dbReference>
<dbReference type="Pfam" id="PF00591">
    <property type="entry name" value="Glycos_transf_3"/>
    <property type="match status" value="1"/>
</dbReference>
<dbReference type="SUPFAM" id="SSF52418">
    <property type="entry name" value="Nucleoside phosphorylase/phosphoribosyltransferase catalytic domain"/>
    <property type="match status" value="1"/>
</dbReference>
<dbReference type="SUPFAM" id="SSF47648">
    <property type="entry name" value="Nucleoside phosphorylase/phosphoribosyltransferase N-terminal domain"/>
    <property type="match status" value="1"/>
</dbReference>
<keyword id="KW-0028">Amino-acid biosynthesis</keyword>
<keyword id="KW-0057">Aromatic amino acid biosynthesis</keyword>
<keyword id="KW-0328">Glycosyltransferase</keyword>
<keyword id="KW-0460">Magnesium</keyword>
<keyword id="KW-0479">Metal-binding</keyword>
<keyword id="KW-0808">Transferase</keyword>
<keyword id="KW-0822">Tryptophan biosynthesis</keyword>